<keyword id="KW-1070">Brassinosteroid signaling pathway</keyword>
<keyword id="KW-0963">Cytoplasm</keyword>
<keyword id="KW-0539">Nucleus</keyword>
<keyword id="KW-1185">Reference proteome</keyword>
<name>2A5B_ARATH</name>
<protein>
    <recommendedName>
        <fullName>Serine/threonine protein phosphatase 2A 57 kDa regulatory subunit B' beta isoform</fullName>
        <shortName>AtB' beta</shortName>
        <shortName>PP2A, B' subunit, beta isoform</shortName>
    </recommendedName>
</protein>
<sequence length="499" mass="57472">MFKKIMKGGHRKPSKSEANEPSSYGIGLPDNRSGPGSNVVVSHASRGALVNSSPSPVTATPPPPPLGSVEPLPLFRDVPVSERQTLFLRKLQNCCFLFDFTDTIKNARDKEIKRQTLLELVDFIQSGSSKISESCQEEMIKMISVNIFRSLPPASHENTGQEPADPEEEEPYLEPSWPHLQLVYELLLRYVVSTDTDTKVAKRYIDHSFVLKLLDLFDSEDPREREYLKTILHRIYGKFMVHRPFIRKAINNIFYRFIYETERHSGIGELLEILGSIINGFALPMKEEHKLFLIRVLIPLHKPKPIVVYHQQLSYCIVQFVEKDYKLADTVIRGLLKYWPVTNCSKENLFLGELEEVLEATQPVEFQRCMVPLFQQIGRCLTSSHFQVAERALFLWNNEHIVGLIAQNRSVILPIIYPTLEKNIQSHWNQAVHGLTTNIKKMFMEMDPELFEECQRQYEEKQAKSKEVEEQRQYTWKRLAEAAAERDGGGGEEDHMITS</sequence>
<organism>
    <name type="scientific">Arabidopsis thaliana</name>
    <name type="common">Mouse-ear cress</name>
    <dbReference type="NCBI Taxonomy" id="3702"/>
    <lineage>
        <taxon>Eukaryota</taxon>
        <taxon>Viridiplantae</taxon>
        <taxon>Streptophyta</taxon>
        <taxon>Embryophyta</taxon>
        <taxon>Tracheophyta</taxon>
        <taxon>Spermatophyta</taxon>
        <taxon>Magnoliopsida</taxon>
        <taxon>eudicotyledons</taxon>
        <taxon>Gunneridae</taxon>
        <taxon>Pentapetalae</taxon>
        <taxon>rosids</taxon>
        <taxon>malvids</taxon>
        <taxon>Brassicales</taxon>
        <taxon>Brassicaceae</taxon>
        <taxon>Camelineae</taxon>
        <taxon>Arabidopsis</taxon>
    </lineage>
</organism>
<comment type="function">
    <text evidence="1 3">The B regulatory subunit may modulate substrate selectivity and catalytic activity, and may also direct the localization of the catalytic enzyme to a particular subcellular compartment (By similarity). Required for the formation of the PP2A holoenzyme that positively regulates brassinosteroid signaling by dephosphorylating and activating BZR1 (PubMed:21258370).</text>
</comment>
<comment type="subunit">
    <text evidence="3 4 5 8">PP2A consists of a common heteromeric enzyme, composed of a catalytic subunit (subunits C), a constant regulatory subunit (subunit A), and a variety of regulatory subunits such as subunits B (the R2/B/PR55/B55, R3/B''/PR72/PR130/PR59 and R5/B'/B56 families) (Probable). Interacts with BZR1 (PubMed:21258370). Interacts with BRI1 (PubMed:26517938). Interacts with SRK2E/OST1 (PubMed:26175513).</text>
</comment>
<comment type="subcellular location">
    <subcellularLocation>
        <location evidence="5">Nucleus</location>
    </subcellularLocation>
    <subcellularLocation>
        <location evidence="5">Cytoplasm</location>
    </subcellularLocation>
</comment>
<comment type="tissue specificity">
    <text evidence="6">Expressed ubiquitously, higher levels in cotyledons and flowers.</text>
</comment>
<comment type="similarity">
    <text evidence="7">Belongs to the phosphatase 2A regulatory subunit B56 family.</text>
</comment>
<feature type="chain" id="PRO_0000071461" description="Serine/threonine protein phosphatase 2A 57 kDa regulatory subunit B' beta isoform">
    <location>
        <begin position="1"/>
        <end position="499"/>
    </location>
</feature>
<feature type="region of interest" description="Disordered" evidence="2">
    <location>
        <begin position="1"/>
        <end position="65"/>
    </location>
</feature>
<feature type="compositionally biased region" description="Basic residues" evidence="2">
    <location>
        <begin position="1"/>
        <end position="13"/>
    </location>
</feature>
<reference key="1">
    <citation type="journal article" date="1997" name="Eur. J. Biochem.">
        <title>Differential expression of three Arabidopsis genes encoding the B' regulatory subunit of protein phosphatase 2A.</title>
        <authorList>
            <person name="Latorre K.A."/>
            <person name="Harris D.M."/>
            <person name="Rundle S.J."/>
        </authorList>
    </citation>
    <scope>NUCLEOTIDE SEQUENCE [MRNA]</scope>
    <scope>TISSUE SPECIFICITY</scope>
</reference>
<reference key="2">
    <citation type="journal article" date="2000" name="Nature">
        <title>Sequence and analysis of chromosome 3 of the plant Arabidopsis thaliana.</title>
        <authorList>
            <person name="Salanoubat M."/>
            <person name="Lemcke K."/>
            <person name="Rieger M."/>
            <person name="Ansorge W."/>
            <person name="Unseld M."/>
            <person name="Fartmann B."/>
            <person name="Valle G."/>
            <person name="Bloecker H."/>
            <person name="Perez-Alonso M."/>
            <person name="Obermaier B."/>
            <person name="Delseny M."/>
            <person name="Boutry M."/>
            <person name="Grivell L.A."/>
            <person name="Mache R."/>
            <person name="Puigdomenech P."/>
            <person name="De Simone V."/>
            <person name="Choisne N."/>
            <person name="Artiguenave F."/>
            <person name="Robert C."/>
            <person name="Brottier P."/>
            <person name="Wincker P."/>
            <person name="Cattolico L."/>
            <person name="Weissenbach J."/>
            <person name="Saurin W."/>
            <person name="Quetier F."/>
            <person name="Schaefer M."/>
            <person name="Mueller-Auer S."/>
            <person name="Gabel C."/>
            <person name="Fuchs M."/>
            <person name="Benes V."/>
            <person name="Wurmbach E."/>
            <person name="Drzonek H."/>
            <person name="Erfle H."/>
            <person name="Jordan N."/>
            <person name="Bangert S."/>
            <person name="Wiedelmann R."/>
            <person name="Kranz H."/>
            <person name="Voss H."/>
            <person name="Holland R."/>
            <person name="Brandt P."/>
            <person name="Nyakatura G."/>
            <person name="Vezzi A."/>
            <person name="D'Angelo M."/>
            <person name="Pallavicini A."/>
            <person name="Toppo S."/>
            <person name="Simionati B."/>
            <person name="Conrad A."/>
            <person name="Hornischer K."/>
            <person name="Kauer G."/>
            <person name="Loehnert T.-H."/>
            <person name="Nordsiek G."/>
            <person name="Reichelt J."/>
            <person name="Scharfe M."/>
            <person name="Schoen O."/>
            <person name="Bargues M."/>
            <person name="Terol J."/>
            <person name="Climent J."/>
            <person name="Navarro P."/>
            <person name="Collado C."/>
            <person name="Perez-Perez A."/>
            <person name="Ottenwaelder B."/>
            <person name="Duchemin D."/>
            <person name="Cooke R."/>
            <person name="Laudie M."/>
            <person name="Berger-Llauro C."/>
            <person name="Purnelle B."/>
            <person name="Masuy D."/>
            <person name="de Haan M."/>
            <person name="Maarse A.C."/>
            <person name="Alcaraz J.-P."/>
            <person name="Cottet A."/>
            <person name="Casacuberta E."/>
            <person name="Monfort A."/>
            <person name="Argiriou A."/>
            <person name="Flores M."/>
            <person name="Liguori R."/>
            <person name="Vitale D."/>
            <person name="Mannhaupt G."/>
            <person name="Haase D."/>
            <person name="Schoof H."/>
            <person name="Rudd S."/>
            <person name="Zaccaria P."/>
            <person name="Mewes H.-W."/>
            <person name="Mayer K.F.X."/>
            <person name="Kaul S."/>
            <person name="Town C.D."/>
            <person name="Koo H.L."/>
            <person name="Tallon L.J."/>
            <person name="Jenkins J."/>
            <person name="Rooney T."/>
            <person name="Rizzo M."/>
            <person name="Walts A."/>
            <person name="Utterback T."/>
            <person name="Fujii C.Y."/>
            <person name="Shea T.P."/>
            <person name="Creasy T.H."/>
            <person name="Haas B."/>
            <person name="Maiti R."/>
            <person name="Wu D."/>
            <person name="Peterson J."/>
            <person name="Van Aken S."/>
            <person name="Pai G."/>
            <person name="Militscher J."/>
            <person name="Sellers P."/>
            <person name="Gill J.E."/>
            <person name="Feldblyum T.V."/>
            <person name="Preuss D."/>
            <person name="Lin X."/>
            <person name="Nierman W.C."/>
            <person name="Salzberg S.L."/>
            <person name="White O."/>
            <person name="Venter J.C."/>
            <person name="Fraser C.M."/>
            <person name="Kaneko T."/>
            <person name="Nakamura Y."/>
            <person name="Sato S."/>
            <person name="Kato T."/>
            <person name="Asamizu E."/>
            <person name="Sasamoto S."/>
            <person name="Kimura T."/>
            <person name="Idesawa K."/>
            <person name="Kawashima K."/>
            <person name="Kishida Y."/>
            <person name="Kiyokawa C."/>
            <person name="Kohara M."/>
            <person name="Matsumoto M."/>
            <person name="Matsuno A."/>
            <person name="Muraki A."/>
            <person name="Nakayama S."/>
            <person name="Nakazaki N."/>
            <person name="Shinpo S."/>
            <person name="Takeuchi C."/>
            <person name="Wada T."/>
            <person name="Watanabe A."/>
            <person name="Yamada M."/>
            <person name="Yasuda M."/>
            <person name="Tabata S."/>
        </authorList>
    </citation>
    <scope>NUCLEOTIDE SEQUENCE [LARGE SCALE GENOMIC DNA]</scope>
    <source>
        <strain>cv. Columbia</strain>
    </source>
</reference>
<reference key="3">
    <citation type="journal article" date="2017" name="Plant J.">
        <title>Araport11: a complete reannotation of the Arabidopsis thaliana reference genome.</title>
        <authorList>
            <person name="Cheng C.Y."/>
            <person name="Krishnakumar V."/>
            <person name="Chan A.P."/>
            <person name="Thibaud-Nissen F."/>
            <person name="Schobel S."/>
            <person name="Town C.D."/>
        </authorList>
    </citation>
    <scope>GENOME REANNOTATION</scope>
    <source>
        <strain>cv. Columbia</strain>
    </source>
</reference>
<reference key="4">
    <citation type="journal article" date="2003" name="Science">
        <title>Empirical analysis of transcriptional activity in the Arabidopsis genome.</title>
        <authorList>
            <person name="Yamada K."/>
            <person name="Lim J."/>
            <person name="Dale J.M."/>
            <person name="Chen H."/>
            <person name="Shinn P."/>
            <person name="Palm C.J."/>
            <person name="Southwick A.M."/>
            <person name="Wu H.C."/>
            <person name="Kim C.J."/>
            <person name="Nguyen M."/>
            <person name="Pham P.K."/>
            <person name="Cheuk R.F."/>
            <person name="Karlin-Newmann G."/>
            <person name="Liu S.X."/>
            <person name="Lam B."/>
            <person name="Sakano H."/>
            <person name="Wu T."/>
            <person name="Yu G."/>
            <person name="Miranda M."/>
            <person name="Quach H.L."/>
            <person name="Tripp M."/>
            <person name="Chang C.H."/>
            <person name="Lee J.M."/>
            <person name="Toriumi M.J."/>
            <person name="Chan M.M."/>
            <person name="Tang C.C."/>
            <person name="Onodera C.S."/>
            <person name="Deng J.M."/>
            <person name="Akiyama K."/>
            <person name="Ansari Y."/>
            <person name="Arakawa T."/>
            <person name="Banh J."/>
            <person name="Banno F."/>
            <person name="Bowser L."/>
            <person name="Brooks S.Y."/>
            <person name="Carninci P."/>
            <person name="Chao Q."/>
            <person name="Choy N."/>
            <person name="Enju A."/>
            <person name="Goldsmith A.D."/>
            <person name="Gurjal M."/>
            <person name="Hansen N.F."/>
            <person name="Hayashizaki Y."/>
            <person name="Johnson-Hopson C."/>
            <person name="Hsuan V.W."/>
            <person name="Iida K."/>
            <person name="Karnes M."/>
            <person name="Khan S."/>
            <person name="Koesema E."/>
            <person name="Ishida J."/>
            <person name="Jiang P.X."/>
            <person name="Jones T."/>
            <person name="Kawai J."/>
            <person name="Kamiya A."/>
            <person name="Meyers C."/>
            <person name="Nakajima M."/>
            <person name="Narusaka M."/>
            <person name="Seki M."/>
            <person name="Sakurai T."/>
            <person name="Satou M."/>
            <person name="Tamse R."/>
            <person name="Vaysberg M."/>
            <person name="Wallender E.K."/>
            <person name="Wong C."/>
            <person name="Yamamura Y."/>
            <person name="Yuan S."/>
            <person name="Shinozaki K."/>
            <person name="Davis R.W."/>
            <person name="Theologis A."/>
            <person name="Ecker J.R."/>
        </authorList>
    </citation>
    <scope>NUCLEOTIDE SEQUENCE [LARGE SCALE MRNA]</scope>
    <source>
        <strain>cv. Columbia</strain>
    </source>
</reference>
<reference key="5">
    <citation type="journal article" date="1999" name="Eur. J. Biochem.">
        <title>Molecular characterization of the B' regulatory subunit gene family of Arabidopsis protein phosphatase 2A.</title>
        <authorList>
            <person name="Haynes J.G."/>
            <person name="Hartung A.J."/>
            <person name="Hendershot J.D. III"/>
            <person name="Passingham R.S."/>
            <person name="Rundle S.J."/>
        </authorList>
    </citation>
    <scope>INTERACTION WITH PP2AA1</scope>
</reference>
<reference key="6">
    <citation type="journal article" date="2002" name="Plant Physiol.">
        <title>Molecular characterization and evolution of the protein phosphatase 2A B' regulatory subunit family in plants.</title>
        <authorList>
            <person name="Terol J."/>
            <person name="Bargues M."/>
            <person name="Carrasco P."/>
            <person name="Perez-Alonso M."/>
            <person name="Paricio N."/>
        </authorList>
    </citation>
    <scope>NOMENCLATURE</scope>
</reference>
<reference key="7">
    <citation type="journal article" date="2011" name="Nat. Cell Biol.">
        <title>PP2A activates brassinosteroid-responsive gene expression and plant growth by dephosphorylating BZR1.</title>
        <authorList>
            <person name="Tang W."/>
            <person name="Yuan M."/>
            <person name="Wang R."/>
            <person name="Yang Y."/>
            <person name="Wang C."/>
            <person name="Oses-Prieto J.A."/>
            <person name="Kim T.W."/>
            <person name="Zhou H.W."/>
            <person name="Deng Z."/>
            <person name="Gampala S.S."/>
            <person name="Gendron J.M."/>
            <person name="Jonassen E.M."/>
            <person name="Lillo C."/>
            <person name="DeLong A."/>
            <person name="Burlingame A.L."/>
            <person name="Sun Y."/>
            <person name="Wang Z.Y."/>
        </authorList>
    </citation>
    <scope>FUNCTION</scope>
    <scope>INTERACTION WITH BZR1</scope>
</reference>
<reference key="8">
    <citation type="journal article" date="2015" name="Plant Physiol.">
        <title>Identification of Open Stomata1-interacting proteins reveals interactions with sucrose non-fermenting1-related protein kinases2 and with type 2a protein phosphatases that function in abscisic acid responses.</title>
        <authorList>
            <person name="Waadt R."/>
            <person name="Manalansan B."/>
            <person name="Rauniyar N."/>
            <person name="Munemasa S."/>
            <person name="Booker M.A."/>
            <person name="Brandt B."/>
            <person name="Waadt C."/>
            <person name="Nusinow D.A."/>
            <person name="Kay S.A."/>
            <person name="Kunz H.H."/>
            <person name="Schumacher K."/>
            <person name="DeLong A."/>
            <person name="Yates J.R. III"/>
            <person name="Schroeder J.I."/>
        </authorList>
    </citation>
    <scope>IDENTIFICATION BY MASS SPECTROMETRY</scope>
    <scope>INTERACTION WITH SRK2E/OST1</scope>
</reference>
<reference key="9">
    <citation type="journal article" date="2016" name="Mol. Plant">
        <title>The brassinosteroid-activated BRI1 receptor kinase is switched off by dephosphorylation mediated by cytoplasm-localized PP2A B' subunits.</title>
        <authorList>
            <person name="Wang R."/>
            <person name="Liu M."/>
            <person name="Yuan M."/>
            <person name="Oses-Prieto J.A."/>
            <person name="Cai X."/>
            <person name="Sun Y."/>
            <person name="Burlingame A.L."/>
            <person name="Wang Z.Y."/>
            <person name="Tang W."/>
        </authorList>
    </citation>
    <scope>INTERACTION WITH BRI1</scope>
    <scope>SUBCELLULAR LOCATION</scope>
</reference>
<proteinExistence type="evidence at protein level"/>
<gene>
    <name type="primary">B'BETA</name>
    <name type="ordered locus">At3g09880</name>
    <name type="ORF">F8A24.7</name>
</gene>
<accession>O04376</accession>
<evidence type="ECO:0000250" key="1">
    <source>
        <dbReference type="UniProtKB" id="Q13362"/>
    </source>
</evidence>
<evidence type="ECO:0000256" key="2">
    <source>
        <dbReference type="SAM" id="MobiDB-lite"/>
    </source>
</evidence>
<evidence type="ECO:0000269" key="3">
    <source>
    </source>
</evidence>
<evidence type="ECO:0000269" key="4">
    <source>
    </source>
</evidence>
<evidence type="ECO:0000269" key="5">
    <source>
    </source>
</evidence>
<evidence type="ECO:0000269" key="6">
    <source>
    </source>
</evidence>
<evidence type="ECO:0000305" key="7"/>
<evidence type="ECO:0000305" key="8">
    <source>
    </source>
</evidence>
<dbReference type="EMBL" id="U73527">
    <property type="protein sequence ID" value="AAB58901.1"/>
    <property type="molecule type" value="mRNA"/>
</dbReference>
<dbReference type="EMBL" id="AC015985">
    <property type="protein sequence ID" value="AAF23248.1"/>
    <property type="molecule type" value="Genomic_DNA"/>
</dbReference>
<dbReference type="EMBL" id="CP002686">
    <property type="protein sequence ID" value="AEE74825.1"/>
    <property type="molecule type" value="Genomic_DNA"/>
</dbReference>
<dbReference type="EMBL" id="AY113852">
    <property type="protein sequence ID" value="AAM44900.1"/>
    <property type="molecule type" value="mRNA"/>
</dbReference>
<dbReference type="EMBL" id="AY072226">
    <property type="protein sequence ID" value="AAL60047.1"/>
    <property type="molecule type" value="mRNA"/>
</dbReference>
<dbReference type="SMR" id="O04376"/>
<dbReference type="BioGRID" id="5480">
    <property type="interactions" value="4"/>
</dbReference>
<dbReference type="FunCoup" id="O04376">
    <property type="interactions" value="4162"/>
</dbReference>
<dbReference type="STRING" id="3702.O04376"/>
<dbReference type="PaxDb" id="3702-AT3G09880.1"/>
<dbReference type="ProteomicsDB" id="245133"/>
<dbReference type="EnsemblPlants" id="AT3G09880.1">
    <property type="protein sequence ID" value="AT3G09880.1"/>
    <property type="gene ID" value="AT3G09880"/>
</dbReference>
<dbReference type="Gramene" id="AT3G09880.1">
    <property type="protein sequence ID" value="AT3G09880.1"/>
    <property type="gene ID" value="AT3G09880"/>
</dbReference>
<dbReference type="KEGG" id="ath:AT3G09880"/>
<dbReference type="Araport" id="AT3G09880"/>
<dbReference type="TAIR" id="AT3G09880">
    <property type="gene designation" value="ATB' BETA"/>
</dbReference>
<dbReference type="eggNOG" id="KOG2085">
    <property type="taxonomic scope" value="Eukaryota"/>
</dbReference>
<dbReference type="HOGENOM" id="CLU_012437_4_1_1"/>
<dbReference type="InParanoid" id="O04376"/>
<dbReference type="OMA" id="LIYPEVI"/>
<dbReference type="OrthoDB" id="10264446at2759"/>
<dbReference type="PhylomeDB" id="O04376"/>
<dbReference type="PRO" id="PR:O04376"/>
<dbReference type="Proteomes" id="UP000006548">
    <property type="component" value="Chromosome 3"/>
</dbReference>
<dbReference type="ExpressionAtlas" id="O04376">
    <property type="expression patterns" value="baseline and differential"/>
</dbReference>
<dbReference type="GO" id="GO:0005737">
    <property type="term" value="C:cytoplasm"/>
    <property type="evidence" value="ECO:0000314"/>
    <property type="project" value="UniProtKB"/>
</dbReference>
<dbReference type="GO" id="GO:0005634">
    <property type="term" value="C:nucleus"/>
    <property type="evidence" value="ECO:0000314"/>
    <property type="project" value="UniProtKB"/>
</dbReference>
<dbReference type="GO" id="GO:0000159">
    <property type="term" value="C:protein phosphatase type 2A complex"/>
    <property type="evidence" value="ECO:0007669"/>
    <property type="project" value="InterPro"/>
</dbReference>
<dbReference type="GO" id="GO:0019888">
    <property type="term" value="F:protein phosphatase regulator activity"/>
    <property type="evidence" value="ECO:0007669"/>
    <property type="project" value="InterPro"/>
</dbReference>
<dbReference type="GO" id="GO:0009742">
    <property type="term" value="P:brassinosteroid mediated signaling pathway"/>
    <property type="evidence" value="ECO:0007669"/>
    <property type="project" value="UniProtKB-KW"/>
</dbReference>
<dbReference type="GO" id="GO:0009554">
    <property type="term" value="P:megasporogenesis"/>
    <property type="evidence" value="ECO:0000316"/>
    <property type="project" value="TAIR"/>
</dbReference>
<dbReference type="GO" id="GO:0051177">
    <property type="term" value="P:meiotic sister chromatid cohesion"/>
    <property type="evidence" value="ECO:0000316"/>
    <property type="project" value="TAIR"/>
</dbReference>
<dbReference type="GO" id="GO:0009556">
    <property type="term" value="P:microsporogenesis"/>
    <property type="evidence" value="ECO:0000316"/>
    <property type="project" value="TAIR"/>
</dbReference>
<dbReference type="FunFam" id="1.25.10.10:FF:000041">
    <property type="entry name" value="Serine/threonine protein phosphatase 2A regulatory subunit"/>
    <property type="match status" value="1"/>
</dbReference>
<dbReference type="Gene3D" id="1.25.10.10">
    <property type="entry name" value="Leucine-rich Repeat Variant"/>
    <property type="match status" value="1"/>
</dbReference>
<dbReference type="InterPro" id="IPR011989">
    <property type="entry name" value="ARM-like"/>
</dbReference>
<dbReference type="InterPro" id="IPR016024">
    <property type="entry name" value="ARM-type_fold"/>
</dbReference>
<dbReference type="InterPro" id="IPR002554">
    <property type="entry name" value="PP2A_B56"/>
</dbReference>
<dbReference type="PANTHER" id="PTHR10257">
    <property type="entry name" value="SERINE/THREONINE PROTEIN PHOSPHATASE 2A PP2A REGULATORY SUBUNIT B"/>
    <property type="match status" value="1"/>
</dbReference>
<dbReference type="PANTHER" id="PTHR10257:SF3">
    <property type="entry name" value="SERINE_THREONINE-PROTEIN PHOSPHATASE 2A 56 KDA REGULATORY SUBUNIT GAMMA ISOFORM"/>
    <property type="match status" value="1"/>
</dbReference>
<dbReference type="Pfam" id="PF01603">
    <property type="entry name" value="B56"/>
    <property type="match status" value="1"/>
</dbReference>
<dbReference type="PIRSF" id="PIRSF028043">
    <property type="entry name" value="PP2A_B56"/>
    <property type="match status" value="1"/>
</dbReference>
<dbReference type="SUPFAM" id="SSF48371">
    <property type="entry name" value="ARM repeat"/>
    <property type="match status" value="1"/>
</dbReference>